<proteinExistence type="inferred from homology"/>
<feature type="chain" id="PRO_1000202852" description="Transcription elongation factor GreA">
    <location>
        <begin position="1"/>
        <end position="160"/>
    </location>
</feature>
<protein>
    <recommendedName>
        <fullName evidence="1">Transcription elongation factor GreA</fullName>
    </recommendedName>
    <alternativeName>
        <fullName evidence="1">Transcript cleavage factor GreA</fullName>
    </alternativeName>
</protein>
<comment type="function">
    <text evidence="1">Necessary for efficient RNA polymerase transcription elongation past template-encoded arresting sites. The arresting sites in DNA have the property of trapping a certain fraction of elongating RNA polymerases that pass through, resulting in locked ternary complexes. Cleavage of the nascent transcript by cleavage factors such as GreA or GreB allows the resumption of elongation from the new 3'terminus. GreA releases sequences of 2 to 3 nucleotides.</text>
</comment>
<comment type="similarity">
    <text evidence="1">Belongs to the GreA/GreB family.</text>
</comment>
<organism>
    <name type="scientific">Francisella tularensis subsp. tularensis (strain FSC 198)</name>
    <dbReference type="NCBI Taxonomy" id="393115"/>
    <lineage>
        <taxon>Bacteria</taxon>
        <taxon>Pseudomonadati</taxon>
        <taxon>Pseudomonadota</taxon>
        <taxon>Gammaproteobacteria</taxon>
        <taxon>Thiotrichales</taxon>
        <taxon>Francisellaceae</taxon>
        <taxon>Francisella</taxon>
    </lineage>
</organism>
<keyword id="KW-0238">DNA-binding</keyword>
<keyword id="KW-0804">Transcription</keyword>
<keyword id="KW-0805">Transcription regulation</keyword>
<name>GREA_FRAT1</name>
<sequence>MANDRVPMTPAGEQALRAELDKLKKIERPAIIEAIAEARDHGDLKENAEYHAARERQGIIEGRIKDIESKLSNAQVIDVTKIQANGMVIFGATVTIMNVDTEEETTYKIVGEDEADIDNQKISVVAPLARALIKKEEGDEITLDTPKGKVTYEIVAVEYK</sequence>
<evidence type="ECO:0000255" key="1">
    <source>
        <dbReference type="HAMAP-Rule" id="MF_00105"/>
    </source>
</evidence>
<dbReference type="EMBL" id="AM286280">
    <property type="protein sequence ID" value="CAL09329.1"/>
    <property type="molecule type" value="Genomic_DNA"/>
</dbReference>
<dbReference type="RefSeq" id="WP_003016773.1">
    <property type="nucleotide sequence ID" value="NC_008245.1"/>
</dbReference>
<dbReference type="SMR" id="Q14GS9"/>
<dbReference type="KEGG" id="ftf:FTF1313c"/>
<dbReference type="HOGENOM" id="CLU_101379_2_0_6"/>
<dbReference type="GO" id="GO:0003677">
    <property type="term" value="F:DNA binding"/>
    <property type="evidence" value="ECO:0007669"/>
    <property type="project" value="UniProtKB-UniRule"/>
</dbReference>
<dbReference type="GO" id="GO:0070063">
    <property type="term" value="F:RNA polymerase binding"/>
    <property type="evidence" value="ECO:0007669"/>
    <property type="project" value="InterPro"/>
</dbReference>
<dbReference type="GO" id="GO:0006354">
    <property type="term" value="P:DNA-templated transcription elongation"/>
    <property type="evidence" value="ECO:0007669"/>
    <property type="project" value="TreeGrafter"/>
</dbReference>
<dbReference type="GO" id="GO:0032784">
    <property type="term" value="P:regulation of DNA-templated transcription elongation"/>
    <property type="evidence" value="ECO:0007669"/>
    <property type="project" value="UniProtKB-UniRule"/>
</dbReference>
<dbReference type="FunFam" id="1.10.287.180:FF:000001">
    <property type="entry name" value="Transcription elongation factor GreA"/>
    <property type="match status" value="1"/>
</dbReference>
<dbReference type="FunFam" id="3.10.50.30:FF:000001">
    <property type="entry name" value="Transcription elongation factor GreA"/>
    <property type="match status" value="1"/>
</dbReference>
<dbReference type="Gene3D" id="3.10.50.30">
    <property type="entry name" value="Transcription elongation factor, GreA/GreB, C-terminal domain"/>
    <property type="match status" value="1"/>
</dbReference>
<dbReference type="Gene3D" id="1.10.287.180">
    <property type="entry name" value="Transcription elongation factor, GreA/GreB, N-terminal domain"/>
    <property type="match status" value="1"/>
</dbReference>
<dbReference type="HAMAP" id="MF_00105">
    <property type="entry name" value="GreA_GreB"/>
    <property type="match status" value="1"/>
</dbReference>
<dbReference type="InterPro" id="IPR036953">
    <property type="entry name" value="GreA/GreB_C_sf"/>
</dbReference>
<dbReference type="InterPro" id="IPR018151">
    <property type="entry name" value="TF_GreA/GreB_CS"/>
</dbReference>
<dbReference type="InterPro" id="IPR006359">
    <property type="entry name" value="Tscrpt_elong_fac_GreA"/>
</dbReference>
<dbReference type="InterPro" id="IPR028624">
    <property type="entry name" value="Tscrpt_elong_fac_GreA/B"/>
</dbReference>
<dbReference type="InterPro" id="IPR001437">
    <property type="entry name" value="Tscrpt_elong_fac_GreA/B_C"/>
</dbReference>
<dbReference type="InterPro" id="IPR023459">
    <property type="entry name" value="Tscrpt_elong_fac_GreA/B_fam"/>
</dbReference>
<dbReference type="InterPro" id="IPR022691">
    <property type="entry name" value="Tscrpt_elong_fac_GreA/B_N"/>
</dbReference>
<dbReference type="InterPro" id="IPR036805">
    <property type="entry name" value="Tscrpt_elong_fac_GreA/B_N_sf"/>
</dbReference>
<dbReference type="NCBIfam" id="TIGR01462">
    <property type="entry name" value="greA"/>
    <property type="match status" value="1"/>
</dbReference>
<dbReference type="NCBIfam" id="NF001261">
    <property type="entry name" value="PRK00226.1-2"/>
    <property type="match status" value="1"/>
</dbReference>
<dbReference type="NCBIfam" id="NF001263">
    <property type="entry name" value="PRK00226.1-4"/>
    <property type="match status" value="1"/>
</dbReference>
<dbReference type="NCBIfam" id="NF001264">
    <property type="entry name" value="PRK00226.1-5"/>
    <property type="match status" value="1"/>
</dbReference>
<dbReference type="PANTHER" id="PTHR30437">
    <property type="entry name" value="TRANSCRIPTION ELONGATION FACTOR GREA"/>
    <property type="match status" value="1"/>
</dbReference>
<dbReference type="PANTHER" id="PTHR30437:SF4">
    <property type="entry name" value="TRANSCRIPTION ELONGATION FACTOR GREA"/>
    <property type="match status" value="1"/>
</dbReference>
<dbReference type="Pfam" id="PF01272">
    <property type="entry name" value="GreA_GreB"/>
    <property type="match status" value="1"/>
</dbReference>
<dbReference type="Pfam" id="PF03449">
    <property type="entry name" value="GreA_GreB_N"/>
    <property type="match status" value="1"/>
</dbReference>
<dbReference type="PIRSF" id="PIRSF006092">
    <property type="entry name" value="GreA_GreB"/>
    <property type="match status" value="1"/>
</dbReference>
<dbReference type="SUPFAM" id="SSF54534">
    <property type="entry name" value="FKBP-like"/>
    <property type="match status" value="1"/>
</dbReference>
<dbReference type="SUPFAM" id="SSF46557">
    <property type="entry name" value="GreA transcript cleavage protein, N-terminal domain"/>
    <property type="match status" value="1"/>
</dbReference>
<dbReference type="PROSITE" id="PS00829">
    <property type="entry name" value="GREAB_1"/>
    <property type="match status" value="1"/>
</dbReference>
<gene>
    <name evidence="1" type="primary">greA</name>
    <name type="ordered locus">FTF1313c</name>
</gene>
<reference key="1">
    <citation type="journal article" date="2007" name="PLoS ONE">
        <title>Genome sequencing shows that European isolates of Francisella tularensis subspecies tularensis are almost identical to US laboratory strain Schu S4.</title>
        <authorList>
            <person name="Chaudhuri R.R."/>
            <person name="Ren C.-P."/>
            <person name="Desmond L."/>
            <person name="Vincent G.A."/>
            <person name="Silman N.J."/>
            <person name="Brehm J.K."/>
            <person name="Elmore M.J."/>
            <person name="Hudson M.J."/>
            <person name="Forsman M."/>
            <person name="Isherwood K.E."/>
            <person name="Gurycova D."/>
            <person name="Minton N.P."/>
            <person name="Titball R.W."/>
            <person name="Pallen M.J."/>
            <person name="Vipond R."/>
        </authorList>
    </citation>
    <scope>NUCLEOTIDE SEQUENCE [LARGE SCALE GENOMIC DNA]</scope>
    <source>
        <strain>FSC 198</strain>
    </source>
</reference>
<accession>Q14GS9</accession>